<proteinExistence type="inferred from homology"/>
<dbReference type="EMBL" id="CP001600">
    <property type="protein sequence ID" value="ACR67523.1"/>
    <property type="molecule type" value="Genomic_DNA"/>
</dbReference>
<dbReference type="RefSeq" id="WP_015869732.1">
    <property type="nucleotide sequence ID" value="NC_012779.2"/>
</dbReference>
<dbReference type="SMR" id="C5BCR7"/>
<dbReference type="STRING" id="67780.B6E78_12505"/>
<dbReference type="GeneID" id="69537376"/>
<dbReference type="KEGG" id="eic:NT01EI_0281"/>
<dbReference type="PATRIC" id="fig|634503.3.peg.253"/>
<dbReference type="HOGENOM" id="CLU_130694_5_0_6"/>
<dbReference type="Proteomes" id="UP000001485">
    <property type="component" value="Chromosome"/>
</dbReference>
<dbReference type="GO" id="GO:0005737">
    <property type="term" value="C:cytoplasm"/>
    <property type="evidence" value="ECO:0007669"/>
    <property type="project" value="TreeGrafter"/>
</dbReference>
<dbReference type="Gene3D" id="3.30.1200.10">
    <property type="entry name" value="YggU-like"/>
    <property type="match status" value="1"/>
</dbReference>
<dbReference type="HAMAP" id="MF_00634">
    <property type="entry name" value="UPF0235"/>
    <property type="match status" value="1"/>
</dbReference>
<dbReference type="InterPro" id="IPR003746">
    <property type="entry name" value="DUF167"/>
</dbReference>
<dbReference type="InterPro" id="IPR036591">
    <property type="entry name" value="YggU-like_sf"/>
</dbReference>
<dbReference type="NCBIfam" id="TIGR00251">
    <property type="entry name" value="DUF167 family protein"/>
    <property type="match status" value="1"/>
</dbReference>
<dbReference type="NCBIfam" id="NF003466">
    <property type="entry name" value="PRK05090.1"/>
    <property type="match status" value="1"/>
</dbReference>
<dbReference type="PANTHER" id="PTHR13420">
    <property type="entry name" value="UPF0235 PROTEIN C15ORF40"/>
    <property type="match status" value="1"/>
</dbReference>
<dbReference type="PANTHER" id="PTHR13420:SF7">
    <property type="entry name" value="UPF0235 PROTEIN C15ORF40"/>
    <property type="match status" value="1"/>
</dbReference>
<dbReference type="Pfam" id="PF02594">
    <property type="entry name" value="DUF167"/>
    <property type="match status" value="1"/>
</dbReference>
<dbReference type="SMART" id="SM01152">
    <property type="entry name" value="DUF167"/>
    <property type="match status" value="1"/>
</dbReference>
<dbReference type="SUPFAM" id="SSF69786">
    <property type="entry name" value="YggU-like"/>
    <property type="match status" value="1"/>
</dbReference>
<reference key="1">
    <citation type="submission" date="2009-03" db="EMBL/GenBank/DDBJ databases">
        <title>Complete genome sequence of Edwardsiella ictaluri 93-146.</title>
        <authorList>
            <person name="Williams M.L."/>
            <person name="Gillaspy A.F."/>
            <person name="Dyer D.W."/>
            <person name="Thune R.L."/>
            <person name="Waldbieser G.C."/>
            <person name="Schuster S.C."/>
            <person name="Gipson J."/>
            <person name="Zaitshik J."/>
            <person name="Landry C."/>
            <person name="Lawrence M.L."/>
        </authorList>
    </citation>
    <scope>NUCLEOTIDE SEQUENCE [LARGE SCALE GENOMIC DNA]</scope>
    <source>
        <strain>93-146</strain>
    </source>
</reference>
<accession>C5BCR7</accession>
<comment type="similarity">
    <text evidence="1">Belongs to the UPF0235 family.</text>
</comment>
<organism>
    <name type="scientific">Edwardsiella ictaluri (strain 93-146)</name>
    <dbReference type="NCBI Taxonomy" id="634503"/>
    <lineage>
        <taxon>Bacteria</taxon>
        <taxon>Pseudomonadati</taxon>
        <taxon>Pseudomonadota</taxon>
        <taxon>Gammaproteobacteria</taxon>
        <taxon>Enterobacterales</taxon>
        <taxon>Hafniaceae</taxon>
        <taxon>Edwardsiella</taxon>
    </lineage>
</organism>
<gene>
    <name type="ordered locus">NT01EI_0281</name>
</gene>
<evidence type="ECO:0000255" key="1">
    <source>
        <dbReference type="HAMAP-Rule" id="MF_00634"/>
    </source>
</evidence>
<sequence>MSAVSREGDDWILRLYIQPKASRDLIIGLHGDELKVAITAPPVDGQANAHLLKFIAKQFRVAKSRITLEKGELGRHKQLRISQPQQIPDAVAAALG</sequence>
<protein>
    <recommendedName>
        <fullName evidence="1">UPF0235 protein NT01EI_0281</fullName>
    </recommendedName>
</protein>
<name>Y281_EDWI9</name>
<feature type="chain" id="PRO_1000212347" description="UPF0235 protein NT01EI_0281">
    <location>
        <begin position="1"/>
        <end position="96"/>
    </location>
</feature>